<sequence length="65" mass="7306">MSETITVNCPTCGKTVVWGEISPFRPFCSKRCQLIDLGEWAAEEKRIPSSGDLSESDDWSEEPKQ</sequence>
<feature type="chain" id="PRO_0000211726" description="DNA gyrase inhibitor YacG">
    <location>
        <begin position="1"/>
        <end position="65"/>
    </location>
</feature>
<feature type="region of interest" description="Disordered" evidence="2">
    <location>
        <begin position="45"/>
        <end position="65"/>
    </location>
</feature>
<feature type="compositionally biased region" description="Acidic residues" evidence="2">
    <location>
        <begin position="54"/>
        <end position="65"/>
    </location>
</feature>
<feature type="binding site" evidence="1">
    <location>
        <position position="9"/>
    </location>
    <ligand>
        <name>Zn(2+)</name>
        <dbReference type="ChEBI" id="CHEBI:29105"/>
    </ligand>
</feature>
<feature type="binding site" evidence="1">
    <location>
        <position position="12"/>
    </location>
    <ligand>
        <name>Zn(2+)</name>
        <dbReference type="ChEBI" id="CHEBI:29105"/>
    </ligand>
</feature>
<feature type="binding site" evidence="1">
    <location>
        <position position="28"/>
    </location>
    <ligand>
        <name>Zn(2+)</name>
        <dbReference type="ChEBI" id="CHEBI:29105"/>
    </ligand>
</feature>
<feature type="binding site" evidence="1">
    <location>
        <position position="32"/>
    </location>
    <ligand>
        <name>Zn(2+)</name>
        <dbReference type="ChEBI" id="CHEBI:29105"/>
    </ligand>
</feature>
<comment type="function">
    <text evidence="1">Inhibits all the catalytic activities of DNA gyrase by preventing its interaction with DNA. Acts by binding directly to the C-terminal domain of GyrB, which probably disrupts DNA binding by the gyrase.</text>
</comment>
<comment type="cofactor">
    <cofactor evidence="1">
        <name>Zn(2+)</name>
        <dbReference type="ChEBI" id="CHEBI:29105"/>
    </cofactor>
    <text evidence="1">Binds 1 zinc ion.</text>
</comment>
<comment type="subunit">
    <text evidence="1">Interacts with GyrB.</text>
</comment>
<comment type="similarity">
    <text evidence="1">Belongs to the DNA gyrase inhibitor YacG family.</text>
</comment>
<name>YACG_SHIFL</name>
<accession>P0A8I0</accession>
<accession>P36681</accession>
<accession>P75644</accession>
<accession>Q8KJQ7</accession>
<protein>
    <recommendedName>
        <fullName evidence="1">DNA gyrase inhibitor YacG</fullName>
    </recommendedName>
</protein>
<reference key="1">
    <citation type="journal article" date="2002" name="Nucleic Acids Res.">
        <title>Genome sequence of Shigella flexneri 2a: insights into pathogenicity through comparison with genomes of Escherichia coli K12 and O157.</title>
        <authorList>
            <person name="Jin Q."/>
            <person name="Yuan Z."/>
            <person name="Xu J."/>
            <person name="Wang Y."/>
            <person name="Shen Y."/>
            <person name="Lu W."/>
            <person name="Wang J."/>
            <person name="Liu H."/>
            <person name="Yang J."/>
            <person name="Yang F."/>
            <person name="Zhang X."/>
            <person name="Zhang J."/>
            <person name="Yang G."/>
            <person name="Wu H."/>
            <person name="Qu D."/>
            <person name="Dong J."/>
            <person name="Sun L."/>
            <person name="Xue Y."/>
            <person name="Zhao A."/>
            <person name="Gao Y."/>
            <person name="Zhu J."/>
            <person name="Kan B."/>
            <person name="Ding K."/>
            <person name="Chen S."/>
            <person name="Cheng H."/>
            <person name="Yao Z."/>
            <person name="He B."/>
            <person name="Chen R."/>
            <person name="Ma D."/>
            <person name="Qiang B."/>
            <person name="Wen Y."/>
            <person name="Hou Y."/>
            <person name="Yu J."/>
        </authorList>
    </citation>
    <scope>NUCLEOTIDE SEQUENCE [LARGE SCALE GENOMIC DNA]</scope>
    <source>
        <strain>301 / Serotype 2a</strain>
    </source>
</reference>
<reference key="2">
    <citation type="journal article" date="2003" name="Infect. Immun.">
        <title>Complete genome sequence and comparative genomics of Shigella flexneri serotype 2a strain 2457T.</title>
        <authorList>
            <person name="Wei J."/>
            <person name="Goldberg M.B."/>
            <person name="Burland V."/>
            <person name="Venkatesan M.M."/>
            <person name="Deng W."/>
            <person name="Fournier G."/>
            <person name="Mayhew G.F."/>
            <person name="Plunkett G. III"/>
            <person name="Rose D.J."/>
            <person name="Darling A."/>
            <person name="Mau B."/>
            <person name="Perna N.T."/>
            <person name="Payne S.M."/>
            <person name="Runyen-Janecky L.J."/>
            <person name="Zhou S."/>
            <person name="Schwartz D.C."/>
            <person name="Blattner F.R."/>
        </authorList>
    </citation>
    <scope>NUCLEOTIDE SEQUENCE [LARGE SCALE GENOMIC DNA]</scope>
    <source>
        <strain>ATCC 700930 / 2457T / Serotype 2a</strain>
    </source>
</reference>
<evidence type="ECO:0000255" key="1">
    <source>
        <dbReference type="HAMAP-Rule" id="MF_00649"/>
    </source>
</evidence>
<evidence type="ECO:0000256" key="2">
    <source>
        <dbReference type="SAM" id="MobiDB-lite"/>
    </source>
</evidence>
<dbReference type="EMBL" id="AE005674">
    <property type="protein sequence ID" value="AAN41763.1"/>
    <property type="molecule type" value="Genomic_DNA"/>
</dbReference>
<dbReference type="EMBL" id="AE014073">
    <property type="protein sequence ID" value="AAP15644.1"/>
    <property type="molecule type" value="Genomic_DNA"/>
</dbReference>
<dbReference type="RefSeq" id="NP_706056.1">
    <property type="nucleotide sequence ID" value="NC_004337.2"/>
</dbReference>
<dbReference type="RefSeq" id="WP_000005042.1">
    <property type="nucleotide sequence ID" value="NZ_WPGW01000007.1"/>
</dbReference>
<dbReference type="SMR" id="P0A8I0"/>
<dbReference type="STRING" id="198214.SF0098"/>
<dbReference type="PaxDb" id="198214-SF0098"/>
<dbReference type="GeneID" id="1027518"/>
<dbReference type="GeneID" id="93777334"/>
<dbReference type="KEGG" id="sfl:SF0098"/>
<dbReference type="KEGG" id="sfx:S0100"/>
<dbReference type="PATRIC" id="fig|198214.7.peg.112"/>
<dbReference type="HOGENOM" id="CLU_178280_3_1_6"/>
<dbReference type="Proteomes" id="UP000001006">
    <property type="component" value="Chromosome"/>
</dbReference>
<dbReference type="Proteomes" id="UP000002673">
    <property type="component" value="Chromosome"/>
</dbReference>
<dbReference type="GO" id="GO:0008657">
    <property type="term" value="F:DNA topoisomerase type II (double strand cut, ATP-hydrolyzing) inhibitor activity"/>
    <property type="evidence" value="ECO:0007669"/>
    <property type="project" value="UniProtKB-UniRule"/>
</dbReference>
<dbReference type="GO" id="GO:0008270">
    <property type="term" value="F:zinc ion binding"/>
    <property type="evidence" value="ECO:0007669"/>
    <property type="project" value="UniProtKB-UniRule"/>
</dbReference>
<dbReference type="GO" id="GO:0006355">
    <property type="term" value="P:regulation of DNA-templated transcription"/>
    <property type="evidence" value="ECO:0007669"/>
    <property type="project" value="InterPro"/>
</dbReference>
<dbReference type="FunFam" id="3.30.50.10:FF:000026">
    <property type="entry name" value="DNA gyrase inhibitor YacG"/>
    <property type="match status" value="1"/>
</dbReference>
<dbReference type="Gene3D" id="3.30.50.10">
    <property type="entry name" value="Erythroid Transcription Factor GATA-1, subunit A"/>
    <property type="match status" value="1"/>
</dbReference>
<dbReference type="HAMAP" id="MF_00649">
    <property type="entry name" value="DNA_gyrase_inhibitor_YacG"/>
    <property type="match status" value="1"/>
</dbReference>
<dbReference type="InterPro" id="IPR005584">
    <property type="entry name" value="DNA_gyrase_inhibitor_YacG"/>
</dbReference>
<dbReference type="InterPro" id="IPR013088">
    <property type="entry name" value="Znf_NHR/GATA"/>
</dbReference>
<dbReference type="NCBIfam" id="NF001638">
    <property type="entry name" value="PRK00418.1"/>
    <property type="match status" value="1"/>
</dbReference>
<dbReference type="PANTHER" id="PTHR36150">
    <property type="entry name" value="DNA GYRASE INHIBITOR YACG"/>
    <property type="match status" value="1"/>
</dbReference>
<dbReference type="PANTHER" id="PTHR36150:SF1">
    <property type="entry name" value="DNA GYRASE INHIBITOR YACG"/>
    <property type="match status" value="1"/>
</dbReference>
<dbReference type="Pfam" id="PF03884">
    <property type="entry name" value="YacG"/>
    <property type="match status" value="1"/>
</dbReference>
<dbReference type="SUPFAM" id="SSF57716">
    <property type="entry name" value="Glucocorticoid receptor-like (DNA-binding domain)"/>
    <property type="match status" value="1"/>
</dbReference>
<keyword id="KW-0479">Metal-binding</keyword>
<keyword id="KW-1185">Reference proteome</keyword>
<keyword id="KW-0862">Zinc</keyword>
<proteinExistence type="inferred from homology"/>
<gene>
    <name evidence="1" type="primary">yacG</name>
    <name type="ordered locus">SF0098</name>
    <name type="ordered locus">S0100</name>
</gene>
<organism>
    <name type="scientific">Shigella flexneri</name>
    <dbReference type="NCBI Taxonomy" id="623"/>
    <lineage>
        <taxon>Bacteria</taxon>
        <taxon>Pseudomonadati</taxon>
        <taxon>Pseudomonadota</taxon>
        <taxon>Gammaproteobacteria</taxon>
        <taxon>Enterobacterales</taxon>
        <taxon>Enterobacteriaceae</taxon>
        <taxon>Shigella</taxon>
    </lineage>
</organism>